<name>PYRB_METBF</name>
<keyword id="KW-0665">Pyrimidine biosynthesis</keyword>
<keyword id="KW-0808">Transferase</keyword>
<gene>
    <name evidence="1" type="primary">pyrB</name>
    <name type="ordered locus">Mbar_A1168</name>
</gene>
<reference key="1">
    <citation type="journal article" date="2006" name="J. Bacteriol.">
        <title>The Methanosarcina barkeri genome: comparative analysis with Methanosarcina acetivorans and Methanosarcina mazei reveals extensive rearrangement within methanosarcinal genomes.</title>
        <authorList>
            <person name="Maeder D.L."/>
            <person name="Anderson I."/>
            <person name="Brettin T.S."/>
            <person name="Bruce D.C."/>
            <person name="Gilna P."/>
            <person name="Han C.S."/>
            <person name="Lapidus A."/>
            <person name="Metcalf W.W."/>
            <person name="Saunders E."/>
            <person name="Tapia R."/>
            <person name="Sowers K.R."/>
        </authorList>
    </citation>
    <scope>NUCLEOTIDE SEQUENCE [LARGE SCALE GENOMIC DNA]</scope>
    <source>
        <strain>Fusaro / DSM 804</strain>
    </source>
</reference>
<evidence type="ECO:0000255" key="1">
    <source>
        <dbReference type="HAMAP-Rule" id="MF_00001"/>
    </source>
</evidence>
<sequence>MSFKNRNVISMKDFSRKEINYILDTAEKLEPVARGKKRSRLLDGKIIALLFFEPSTRTRLSFESAAQRLGGQVLNLGSVEASSVMKGENLADTIRVISKYADLIVLRHPLDGSARMAAEFASVPIINGGDGSLHHPTQTFLDLYTIRRESHLEGLKIAMAGDLKYGRTVHSLCHALSLYGAEITLVSPPELRMPQEIIRDLQKNNIRIRETDALEEIIGDVEVLYMTRVQRERFPDPEEYEKVKNKLKVTGDLLKNADPSLKILHPLPRVNEISPEVDSTPYACYFEQAFYGVPTRMALLALATGVIE</sequence>
<dbReference type="EC" id="2.1.3.2" evidence="1"/>
<dbReference type="EMBL" id="CP000099">
    <property type="protein sequence ID" value="AAZ70136.1"/>
    <property type="molecule type" value="Genomic_DNA"/>
</dbReference>
<dbReference type="SMR" id="Q46DA6"/>
<dbReference type="STRING" id="269797.Mbar_A1168"/>
<dbReference type="PaxDb" id="269797-Mbar_A1168"/>
<dbReference type="KEGG" id="mba:Mbar_A1168"/>
<dbReference type="eggNOG" id="arCOG00911">
    <property type="taxonomic scope" value="Archaea"/>
</dbReference>
<dbReference type="HOGENOM" id="CLU_043846_1_2_2"/>
<dbReference type="OrthoDB" id="7792at2157"/>
<dbReference type="UniPathway" id="UPA00070">
    <property type="reaction ID" value="UER00116"/>
</dbReference>
<dbReference type="GO" id="GO:0005829">
    <property type="term" value="C:cytosol"/>
    <property type="evidence" value="ECO:0007669"/>
    <property type="project" value="TreeGrafter"/>
</dbReference>
<dbReference type="GO" id="GO:0016597">
    <property type="term" value="F:amino acid binding"/>
    <property type="evidence" value="ECO:0007669"/>
    <property type="project" value="InterPro"/>
</dbReference>
<dbReference type="GO" id="GO:0004070">
    <property type="term" value="F:aspartate carbamoyltransferase activity"/>
    <property type="evidence" value="ECO:0007669"/>
    <property type="project" value="UniProtKB-UniRule"/>
</dbReference>
<dbReference type="GO" id="GO:0006207">
    <property type="term" value="P:'de novo' pyrimidine nucleobase biosynthetic process"/>
    <property type="evidence" value="ECO:0007669"/>
    <property type="project" value="InterPro"/>
</dbReference>
<dbReference type="GO" id="GO:0044205">
    <property type="term" value="P:'de novo' UMP biosynthetic process"/>
    <property type="evidence" value="ECO:0007669"/>
    <property type="project" value="UniProtKB-UniRule"/>
</dbReference>
<dbReference type="GO" id="GO:0006520">
    <property type="term" value="P:amino acid metabolic process"/>
    <property type="evidence" value="ECO:0007669"/>
    <property type="project" value="InterPro"/>
</dbReference>
<dbReference type="FunFam" id="3.40.50.1370:FF:000002">
    <property type="entry name" value="Aspartate carbamoyltransferase 2"/>
    <property type="match status" value="1"/>
</dbReference>
<dbReference type="Gene3D" id="3.40.50.1370">
    <property type="entry name" value="Aspartate/ornithine carbamoyltransferase"/>
    <property type="match status" value="2"/>
</dbReference>
<dbReference type="HAMAP" id="MF_00001">
    <property type="entry name" value="Asp_carb_tr"/>
    <property type="match status" value="1"/>
</dbReference>
<dbReference type="InterPro" id="IPR006132">
    <property type="entry name" value="Asp/Orn_carbamoyltranf_P-bd"/>
</dbReference>
<dbReference type="InterPro" id="IPR006130">
    <property type="entry name" value="Asp/Orn_carbamoylTrfase"/>
</dbReference>
<dbReference type="InterPro" id="IPR036901">
    <property type="entry name" value="Asp/Orn_carbamoylTrfase_sf"/>
</dbReference>
<dbReference type="InterPro" id="IPR002082">
    <property type="entry name" value="Asp_carbamoyltransf"/>
</dbReference>
<dbReference type="InterPro" id="IPR006131">
    <property type="entry name" value="Asp_carbamoyltransf_Asp/Orn-bd"/>
</dbReference>
<dbReference type="NCBIfam" id="TIGR00670">
    <property type="entry name" value="asp_carb_tr"/>
    <property type="match status" value="1"/>
</dbReference>
<dbReference type="NCBIfam" id="NF002032">
    <property type="entry name" value="PRK00856.1"/>
    <property type="match status" value="1"/>
</dbReference>
<dbReference type="PANTHER" id="PTHR45753:SF6">
    <property type="entry name" value="ASPARTATE CARBAMOYLTRANSFERASE"/>
    <property type="match status" value="1"/>
</dbReference>
<dbReference type="PANTHER" id="PTHR45753">
    <property type="entry name" value="ORNITHINE CARBAMOYLTRANSFERASE, MITOCHONDRIAL"/>
    <property type="match status" value="1"/>
</dbReference>
<dbReference type="Pfam" id="PF00185">
    <property type="entry name" value="OTCace"/>
    <property type="match status" value="1"/>
</dbReference>
<dbReference type="Pfam" id="PF02729">
    <property type="entry name" value="OTCace_N"/>
    <property type="match status" value="1"/>
</dbReference>
<dbReference type="PRINTS" id="PR00100">
    <property type="entry name" value="AOTCASE"/>
</dbReference>
<dbReference type="PRINTS" id="PR00101">
    <property type="entry name" value="ATCASE"/>
</dbReference>
<dbReference type="SUPFAM" id="SSF53671">
    <property type="entry name" value="Aspartate/ornithine carbamoyltransferase"/>
    <property type="match status" value="1"/>
</dbReference>
<dbReference type="PROSITE" id="PS00097">
    <property type="entry name" value="CARBAMOYLTRANSFERASE"/>
    <property type="match status" value="1"/>
</dbReference>
<comment type="function">
    <text evidence="1">Catalyzes the condensation of carbamoyl phosphate and aspartate to form carbamoyl aspartate and inorganic phosphate, the committed step in the de novo pyrimidine nucleotide biosynthesis pathway.</text>
</comment>
<comment type="catalytic activity">
    <reaction evidence="1">
        <text>carbamoyl phosphate + L-aspartate = N-carbamoyl-L-aspartate + phosphate + H(+)</text>
        <dbReference type="Rhea" id="RHEA:20013"/>
        <dbReference type="ChEBI" id="CHEBI:15378"/>
        <dbReference type="ChEBI" id="CHEBI:29991"/>
        <dbReference type="ChEBI" id="CHEBI:32814"/>
        <dbReference type="ChEBI" id="CHEBI:43474"/>
        <dbReference type="ChEBI" id="CHEBI:58228"/>
        <dbReference type="EC" id="2.1.3.2"/>
    </reaction>
</comment>
<comment type="pathway">
    <text evidence="1">Pyrimidine metabolism; UMP biosynthesis via de novo pathway; (S)-dihydroorotate from bicarbonate: step 2/3.</text>
</comment>
<comment type="subunit">
    <text evidence="1">Heterooligomer of catalytic and regulatory chains.</text>
</comment>
<comment type="similarity">
    <text evidence="1">Belongs to the aspartate/ornithine carbamoyltransferase superfamily. ATCase family.</text>
</comment>
<organism>
    <name type="scientific">Methanosarcina barkeri (strain Fusaro / DSM 804)</name>
    <dbReference type="NCBI Taxonomy" id="269797"/>
    <lineage>
        <taxon>Archaea</taxon>
        <taxon>Methanobacteriati</taxon>
        <taxon>Methanobacteriota</taxon>
        <taxon>Stenosarchaea group</taxon>
        <taxon>Methanomicrobia</taxon>
        <taxon>Methanosarcinales</taxon>
        <taxon>Methanosarcinaceae</taxon>
        <taxon>Methanosarcina</taxon>
    </lineage>
</organism>
<protein>
    <recommendedName>
        <fullName evidence="1">Aspartate carbamoyltransferase catalytic subunit</fullName>
        <ecNumber evidence="1">2.1.3.2</ecNumber>
    </recommendedName>
    <alternativeName>
        <fullName evidence="1">Aspartate transcarbamylase</fullName>
        <shortName evidence="1">ATCase</shortName>
    </alternativeName>
</protein>
<proteinExistence type="inferred from homology"/>
<accession>Q46DA6</accession>
<feature type="chain" id="PRO_0000301648" description="Aspartate carbamoyltransferase catalytic subunit">
    <location>
        <begin position="1"/>
        <end position="308"/>
    </location>
</feature>
<feature type="binding site" evidence="1">
    <location>
        <position position="57"/>
    </location>
    <ligand>
        <name>carbamoyl phosphate</name>
        <dbReference type="ChEBI" id="CHEBI:58228"/>
    </ligand>
</feature>
<feature type="binding site" evidence="1">
    <location>
        <position position="58"/>
    </location>
    <ligand>
        <name>carbamoyl phosphate</name>
        <dbReference type="ChEBI" id="CHEBI:58228"/>
    </ligand>
</feature>
<feature type="binding site" evidence="1">
    <location>
        <position position="86"/>
    </location>
    <ligand>
        <name>L-aspartate</name>
        <dbReference type="ChEBI" id="CHEBI:29991"/>
    </ligand>
</feature>
<feature type="binding site" evidence="1">
    <location>
        <position position="107"/>
    </location>
    <ligand>
        <name>carbamoyl phosphate</name>
        <dbReference type="ChEBI" id="CHEBI:58228"/>
    </ligand>
</feature>
<feature type="binding site" evidence="1">
    <location>
        <position position="135"/>
    </location>
    <ligand>
        <name>carbamoyl phosphate</name>
        <dbReference type="ChEBI" id="CHEBI:58228"/>
    </ligand>
</feature>
<feature type="binding site" evidence="1">
    <location>
        <position position="138"/>
    </location>
    <ligand>
        <name>carbamoyl phosphate</name>
        <dbReference type="ChEBI" id="CHEBI:58228"/>
    </ligand>
</feature>
<feature type="binding site" evidence="1">
    <location>
        <position position="167"/>
    </location>
    <ligand>
        <name>L-aspartate</name>
        <dbReference type="ChEBI" id="CHEBI:29991"/>
    </ligand>
</feature>
<feature type="binding site" evidence="1">
    <location>
        <position position="228"/>
    </location>
    <ligand>
        <name>L-aspartate</name>
        <dbReference type="ChEBI" id="CHEBI:29991"/>
    </ligand>
</feature>
<feature type="binding site" evidence="1">
    <location>
        <position position="267"/>
    </location>
    <ligand>
        <name>carbamoyl phosphate</name>
        <dbReference type="ChEBI" id="CHEBI:58228"/>
    </ligand>
</feature>
<feature type="binding site" evidence="1">
    <location>
        <position position="268"/>
    </location>
    <ligand>
        <name>carbamoyl phosphate</name>
        <dbReference type="ChEBI" id="CHEBI:58228"/>
    </ligand>
</feature>